<reference key="1">
    <citation type="journal article" date="2000" name="DNA Res.">
        <title>Complete genome structure of the nitrogen-fixing symbiotic bacterium Mesorhizobium loti.</title>
        <authorList>
            <person name="Kaneko T."/>
            <person name="Nakamura Y."/>
            <person name="Sato S."/>
            <person name="Asamizu E."/>
            <person name="Kato T."/>
            <person name="Sasamoto S."/>
            <person name="Watanabe A."/>
            <person name="Idesawa K."/>
            <person name="Ishikawa A."/>
            <person name="Kawashima K."/>
            <person name="Kimura T."/>
            <person name="Kishida Y."/>
            <person name="Kiyokawa C."/>
            <person name="Kohara M."/>
            <person name="Matsumoto M."/>
            <person name="Matsuno A."/>
            <person name="Mochizuki Y."/>
            <person name="Nakayama S."/>
            <person name="Nakazaki N."/>
            <person name="Shimpo S."/>
            <person name="Sugimoto M."/>
            <person name="Takeuchi C."/>
            <person name="Yamada M."/>
            <person name="Tabata S."/>
        </authorList>
    </citation>
    <scope>NUCLEOTIDE SEQUENCE [LARGE SCALE GENOMIC DNA]</scope>
    <source>
        <strain>LMG 29417 / CECT 9101 / MAFF 303099</strain>
    </source>
</reference>
<evidence type="ECO:0000255" key="1">
    <source>
        <dbReference type="HAMAP-Rule" id="MF_00051"/>
    </source>
</evidence>
<comment type="function">
    <text evidence="1">Catalyzes the reversible interconversion of serine and glycine with tetrahydrofolate (THF) serving as the one-carbon carrier. This reaction serves as the major source of one-carbon groups required for the biosynthesis of purines, thymidylate, methionine, and other important biomolecules. Also exhibits THF-independent aldolase activity toward beta-hydroxyamino acids, producing glycine and aldehydes, via a retro-aldol mechanism.</text>
</comment>
<comment type="catalytic activity">
    <reaction evidence="1">
        <text>(6R)-5,10-methylene-5,6,7,8-tetrahydrofolate + glycine + H2O = (6S)-5,6,7,8-tetrahydrofolate + L-serine</text>
        <dbReference type="Rhea" id="RHEA:15481"/>
        <dbReference type="ChEBI" id="CHEBI:15377"/>
        <dbReference type="ChEBI" id="CHEBI:15636"/>
        <dbReference type="ChEBI" id="CHEBI:33384"/>
        <dbReference type="ChEBI" id="CHEBI:57305"/>
        <dbReference type="ChEBI" id="CHEBI:57453"/>
        <dbReference type="EC" id="2.1.2.1"/>
    </reaction>
</comment>
<comment type="cofactor">
    <cofactor evidence="1">
        <name>pyridoxal 5'-phosphate</name>
        <dbReference type="ChEBI" id="CHEBI:597326"/>
    </cofactor>
</comment>
<comment type="pathway">
    <text evidence="1">One-carbon metabolism; tetrahydrofolate interconversion.</text>
</comment>
<comment type="pathway">
    <text evidence="1">Amino-acid biosynthesis; glycine biosynthesis; glycine from L-serine: step 1/1.</text>
</comment>
<comment type="subunit">
    <text evidence="1">Homodimer.</text>
</comment>
<comment type="subcellular location">
    <subcellularLocation>
        <location evidence="1">Cytoplasm</location>
    </subcellularLocation>
</comment>
<comment type="similarity">
    <text evidence="1">Belongs to the SHMT family.</text>
</comment>
<gene>
    <name evidence="1" type="primary">glyA2</name>
    <name type="ordered locus">mlr6114</name>
</gene>
<keyword id="KW-0028">Amino-acid biosynthesis</keyword>
<keyword id="KW-0963">Cytoplasm</keyword>
<keyword id="KW-0554">One-carbon metabolism</keyword>
<keyword id="KW-0663">Pyridoxal phosphate</keyword>
<keyword id="KW-0808">Transferase</keyword>
<sequence>MAEPGTYGRSSLVQVDCRVHELLLRQRRQERTMLKLIASENFASSAVLEATGSIFANKYAEGYPGARYYAGNEIVDELETLAIERLKALFGSEHANVQPYSGSPANQAVYRALLSPRDKVMGLPLPEGGHLTHGWSVNFSGTDYQRVPYGLHDKTQQIDYDRLRETARRERPKLIWVGGTSYPRVFDYAAMAEIALEANSYLVADIAHISGLIVAGAHPNPVVHCDVVTSTSHKSIRGPRGGFILSKNEDRYQALYHSTSKHNLAKRIDRAVFPQLQGGPHMNTIAALAVALQEAATPSFRTYGHQIVKNAKALAEALLGRGYYLVTGGTDNHMLILDLRDRPLSGKAYAERLARAGIITNFDMVPGDPRDPTVTSGIRLGSPAVTSMGMREAEMVQIAAFIDSVCRQPDDQEVHASVRRDVADFCTAFDVPGISDR</sequence>
<organism>
    <name type="scientific">Mesorhizobium japonicum (strain LMG 29417 / CECT 9101 / MAFF 303099)</name>
    <name type="common">Mesorhizobium loti (strain MAFF 303099)</name>
    <dbReference type="NCBI Taxonomy" id="266835"/>
    <lineage>
        <taxon>Bacteria</taxon>
        <taxon>Pseudomonadati</taxon>
        <taxon>Pseudomonadota</taxon>
        <taxon>Alphaproteobacteria</taxon>
        <taxon>Hyphomicrobiales</taxon>
        <taxon>Phyllobacteriaceae</taxon>
        <taxon>Mesorhizobium</taxon>
    </lineage>
</organism>
<name>GLYA2_RHILO</name>
<proteinExistence type="inferred from homology"/>
<feature type="chain" id="PRO_0000113647" description="Serine hydroxymethyltransferase 2">
    <location>
        <begin position="1"/>
        <end position="437"/>
    </location>
</feature>
<feature type="binding site" evidence="1">
    <location>
        <position position="125"/>
    </location>
    <ligand>
        <name>(6S)-5,6,7,8-tetrahydrofolate</name>
        <dbReference type="ChEBI" id="CHEBI:57453"/>
    </ligand>
</feature>
<feature type="binding site" evidence="1">
    <location>
        <begin position="129"/>
        <end position="131"/>
    </location>
    <ligand>
        <name>(6S)-5,6,7,8-tetrahydrofolate</name>
        <dbReference type="ChEBI" id="CHEBI:57453"/>
    </ligand>
</feature>
<feature type="site" description="Plays an important role in substrate specificity" evidence="1">
    <location>
        <position position="233"/>
    </location>
</feature>
<feature type="modified residue" description="N6-(pyridoxal phosphate)lysine" evidence="1">
    <location>
        <position position="234"/>
    </location>
</feature>
<protein>
    <recommendedName>
        <fullName evidence="1">Serine hydroxymethyltransferase 2</fullName>
        <shortName evidence="1">SHMT 2</shortName>
        <shortName evidence="1">Serine methylase 2</shortName>
        <ecNumber evidence="1">2.1.2.1</ecNumber>
    </recommendedName>
</protein>
<dbReference type="EC" id="2.1.2.1" evidence="1"/>
<dbReference type="EMBL" id="BA000012">
    <property type="protein sequence ID" value="BAB52456.1"/>
    <property type="molecule type" value="Genomic_DNA"/>
</dbReference>
<dbReference type="SMR" id="Q98A81"/>
<dbReference type="KEGG" id="mlo:mlr6114"/>
<dbReference type="eggNOG" id="COG0112">
    <property type="taxonomic scope" value="Bacteria"/>
</dbReference>
<dbReference type="HOGENOM" id="CLU_022477_2_1_5"/>
<dbReference type="UniPathway" id="UPA00193"/>
<dbReference type="UniPathway" id="UPA00288">
    <property type="reaction ID" value="UER01023"/>
</dbReference>
<dbReference type="Proteomes" id="UP000000552">
    <property type="component" value="Chromosome"/>
</dbReference>
<dbReference type="GO" id="GO:0005737">
    <property type="term" value="C:cytoplasm"/>
    <property type="evidence" value="ECO:0007669"/>
    <property type="project" value="UniProtKB-SubCell"/>
</dbReference>
<dbReference type="GO" id="GO:0004372">
    <property type="term" value="F:glycine hydroxymethyltransferase activity"/>
    <property type="evidence" value="ECO:0007669"/>
    <property type="project" value="UniProtKB-UniRule"/>
</dbReference>
<dbReference type="GO" id="GO:0030170">
    <property type="term" value="F:pyridoxal phosphate binding"/>
    <property type="evidence" value="ECO:0007669"/>
    <property type="project" value="UniProtKB-UniRule"/>
</dbReference>
<dbReference type="GO" id="GO:0019264">
    <property type="term" value="P:glycine biosynthetic process from serine"/>
    <property type="evidence" value="ECO:0007669"/>
    <property type="project" value="UniProtKB-UniRule"/>
</dbReference>
<dbReference type="GO" id="GO:0035999">
    <property type="term" value="P:tetrahydrofolate interconversion"/>
    <property type="evidence" value="ECO:0007669"/>
    <property type="project" value="UniProtKB-UniRule"/>
</dbReference>
<dbReference type="CDD" id="cd00378">
    <property type="entry name" value="SHMT"/>
    <property type="match status" value="1"/>
</dbReference>
<dbReference type="FunFam" id="3.40.640.10:FF:000001">
    <property type="entry name" value="Serine hydroxymethyltransferase"/>
    <property type="match status" value="1"/>
</dbReference>
<dbReference type="Gene3D" id="3.90.1150.10">
    <property type="entry name" value="Aspartate Aminotransferase, domain 1"/>
    <property type="match status" value="1"/>
</dbReference>
<dbReference type="Gene3D" id="3.40.640.10">
    <property type="entry name" value="Type I PLP-dependent aspartate aminotransferase-like (Major domain)"/>
    <property type="match status" value="1"/>
</dbReference>
<dbReference type="HAMAP" id="MF_00051">
    <property type="entry name" value="SHMT"/>
    <property type="match status" value="1"/>
</dbReference>
<dbReference type="InterPro" id="IPR015424">
    <property type="entry name" value="PyrdxlP-dep_Trfase"/>
</dbReference>
<dbReference type="InterPro" id="IPR015421">
    <property type="entry name" value="PyrdxlP-dep_Trfase_major"/>
</dbReference>
<dbReference type="InterPro" id="IPR015422">
    <property type="entry name" value="PyrdxlP-dep_Trfase_small"/>
</dbReference>
<dbReference type="InterPro" id="IPR001085">
    <property type="entry name" value="Ser_HO-MeTrfase"/>
</dbReference>
<dbReference type="InterPro" id="IPR049943">
    <property type="entry name" value="Ser_HO-MeTrfase-like"/>
</dbReference>
<dbReference type="InterPro" id="IPR019798">
    <property type="entry name" value="Ser_HO-MeTrfase_PLP_BS"/>
</dbReference>
<dbReference type="InterPro" id="IPR039429">
    <property type="entry name" value="SHMT-like_dom"/>
</dbReference>
<dbReference type="NCBIfam" id="NF000586">
    <property type="entry name" value="PRK00011.1"/>
    <property type="match status" value="1"/>
</dbReference>
<dbReference type="PANTHER" id="PTHR11680">
    <property type="entry name" value="SERINE HYDROXYMETHYLTRANSFERASE"/>
    <property type="match status" value="1"/>
</dbReference>
<dbReference type="PANTHER" id="PTHR11680:SF35">
    <property type="entry name" value="SERINE HYDROXYMETHYLTRANSFERASE 1"/>
    <property type="match status" value="1"/>
</dbReference>
<dbReference type="Pfam" id="PF00464">
    <property type="entry name" value="SHMT"/>
    <property type="match status" value="1"/>
</dbReference>
<dbReference type="PIRSF" id="PIRSF000412">
    <property type="entry name" value="SHMT"/>
    <property type="match status" value="1"/>
</dbReference>
<dbReference type="SUPFAM" id="SSF53383">
    <property type="entry name" value="PLP-dependent transferases"/>
    <property type="match status" value="1"/>
</dbReference>
<dbReference type="PROSITE" id="PS00096">
    <property type="entry name" value="SHMT"/>
    <property type="match status" value="1"/>
</dbReference>
<accession>Q98A81</accession>